<protein>
    <recommendedName>
        <fullName>Regulator of G-protein signaling 20</fullName>
        <shortName>RGS20</shortName>
    </recommendedName>
    <alternativeName>
        <fullName>Gz-selective GTPase-activating protein</fullName>
        <shortName>G(z)GAP</shortName>
        <shortName>Gz-GAP</shortName>
    </alternativeName>
    <alternativeName>
        <fullName>Regulator of G-protein signaling Z1</fullName>
    </alternativeName>
    <alternativeName>
        <fullName>Regulator of Gz-selective protein signaling 1</fullName>
    </alternativeName>
</protein>
<gene>
    <name type="primary">RGS20</name>
    <name type="synonym">RGSZ1</name>
    <name type="synonym">ZGAP1</name>
</gene>
<dbReference type="EMBL" id="AF060877">
    <property type="protein sequence ID" value="AAC62009.2"/>
    <property type="molecule type" value="mRNA"/>
</dbReference>
<dbReference type="EMBL" id="AF366054">
    <property type="protein sequence ID" value="AAK54122.1"/>
    <property type="molecule type" value="mRNA"/>
</dbReference>
<dbReference type="EMBL" id="AF366055">
    <property type="protein sequence ID" value="AAK54123.1"/>
    <property type="molecule type" value="mRNA"/>
</dbReference>
<dbReference type="EMBL" id="AF366056">
    <property type="protein sequence ID" value="AAK54124.1"/>
    <property type="molecule type" value="mRNA"/>
</dbReference>
<dbReference type="EMBL" id="AF366057">
    <property type="protein sequence ID" value="AAK54125.1"/>
    <property type="molecule type" value="mRNA"/>
</dbReference>
<dbReference type="EMBL" id="AF074979">
    <property type="protein sequence ID" value="AAC62013.1"/>
    <property type="molecule type" value="mRNA"/>
</dbReference>
<dbReference type="EMBL" id="AF493940">
    <property type="protein sequence ID" value="AAM12654.1"/>
    <property type="molecule type" value="mRNA"/>
</dbReference>
<dbReference type="EMBL" id="BC015614">
    <property type="protein sequence ID" value="AAH15614.2"/>
    <property type="molecule type" value="mRNA"/>
</dbReference>
<dbReference type="EMBL" id="BC063490">
    <property type="protein sequence ID" value="AAH63490.1"/>
    <property type="molecule type" value="mRNA"/>
</dbReference>
<dbReference type="EMBL" id="AY046538">
    <property type="protein sequence ID" value="AAL03971.1"/>
    <property type="molecule type" value="mRNA"/>
</dbReference>
<dbReference type="CCDS" id="CCDS6155.1">
    <molecule id="O76081-1"/>
</dbReference>
<dbReference type="CCDS" id="CCDS6156.1">
    <molecule id="O76081-6"/>
</dbReference>
<dbReference type="CCDS" id="CCDS69482.1">
    <molecule id="O76081-2"/>
</dbReference>
<dbReference type="RefSeq" id="NP_001273602.1">
    <molecule id="O76081-2"/>
    <property type="nucleotide sequence ID" value="NM_001286673.2"/>
</dbReference>
<dbReference type="RefSeq" id="NP_001273603.1">
    <molecule id="O76081-4"/>
    <property type="nucleotide sequence ID" value="NM_001286674.2"/>
</dbReference>
<dbReference type="RefSeq" id="NP_001273604.1">
    <molecule id="O76081-3"/>
    <property type="nucleotide sequence ID" value="NM_001286675.2"/>
</dbReference>
<dbReference type="RefSeq" id="NP_003693.2">
    <molecule id="O76081-6"/>
    <property type="nucleotide sequence ID" value="NM_003702.4"/>
</dbReference>
<dbReference type="RefSeq" id="NP_733466.1">
    <molecule id="O76081-1"/>
    <property type="nucleotide sequence ID" value="NM_170587.4"/>
</dbReference>
<dbReference type="RefSeq" id="XP_011515924.1">
    <property type="nucleotide sequence ID" value="XM_011517622.2"/>
</dbReference>
<dbReference type="BMRB" id="O76081"/>
<dbReference type="SMR" id="O76081"/>
<dbReference type="BioGRID" id="114161">
    <property type="interactions" value="136"/>
</dbReference>
<dbReference type="CORUM" id="O76081"/>
<dbReference type="FunCoup" id="O76081">
    <property type="interactions" value="1205"/>
</dbReference>
<dbReference type="IntAct" id="O76081">
    <property type="interactions" value="83"/>
</dbReference>
<dbReference type="MINT" id="O76081"/>
<dbReference type="STRING" id="9606.ENSP00000297313"/>
<dbReference type="iPTMnet" id="O76081"/>
<dbReference type="PhosphoSitePlus" id="O76081"/>
<dbReference type="SwissPalm" id="O76081"/>
<dbReference type="BioMuta" id="RGS20"/>
<dbReference type="jPOST" id="O76081"/>
<dbReference type="MassIVE" id="O76081"/>
<dbReference type="PaxDb" id="9606-ENSP00000297313"/>
<dbReference type="PeptideAtlas" id="O76081"/>
<dbReference type="ProteomicsDB" id="50382">
    <molecule id="O76081-1"/>
</dbReference>
<dbReference type="ProteomicsDB" id="50383">
    <molecule id="O76081-2"/>
</dbReference>
<dbReference type="ProteomicsDB" id="50384">
    <molecule id="O76081-3"/>
</dbReference>
<dbReference type="ProteomicsDB" id="50385">
    <molecule id="O76081-4"/>
</dbReference>
<dbReference type="ProteomicsDB" id="50386">
    <molecule id="O76081-5"/>
</dbReference>
<dbReference type="ProteomicsDB" id="50387">
    <molecule id="O76081-6"/>
</dbReference>
<dbReference type="Antibodypedia" id="11664">
    <property type="antibodies" value="164 antibodies from 29 providers"/>
</dbReference>
<dbReference type="DNASU" id="8601"/>
<dbReference type="Ensembl" id="ENST00000276500.5">
    <molecule id="O76081-6"/>
    <property type="protein sequence ID" value="ENSP00000276500.4"/>
    <property type="gene ID" value="ENSG00000147509.14"/>
</dbReference>
<dbReference type="Ensembl" id="ENST00000297313.8">
    <molecule id="O76081-1"/>
    <property type="protein sequence ID" value="ENSP00000297313.3"/>
    <property type="gene ID" value="ENSG00000147509.14"/>
</dbReference>
<dbReference type="Ensembl" id="ENST00000344277.10">
    <molecule id="O76081-2"/>
    <property type="protein sequence ID" value="ENSP00000344630.6"/>
    <property type="gene ID" value="ENSG00000147509.14"/>
</dbReference>
<dbReference type="GeneID" id="8601"/>
<dbReference type="KEGG" id="hsa:8601"/>
<dbReference type="MANE-Select" id="ENST00000276500.5">
    <molecule id="O76081-6"/>
    <property type="protein sequence ID" value="ENSP00000276500.4"/>
    <property type="RefSeq nucleotide sequence ID" value="NM_003702.5"/>
    <property type="RefSeq protein sequence ID" value="NP_003693.2"/>
</dbReference>
<dbReference type="UCSC" id="uc003xrp.5">
    <molecule id="O76081-1"/>
    <property type="organism name" value="human"/>
</dbReference>
<dbReference type="AGR" id="HGNC:14600"/>
<dbReference type="CTD" id="8601"/>
<dbReference type="DisGeNET" id="8601"/>
<dbReference type="GeneCards" id="RGS20"/>
<dbReference type="HGNC" id="HGNC:14600">
    <property type="gene designation" value="RGS20"/>
</dbReference>
<dbReference type="HPA" id="ENSG00000147509">
    <property type="expression patterns" value="Tissue enriched (brain)"/>
</dbReference>
<dbReference type="MIM" id="607193">
    <property type="type" value="gene"/>
</dbReference>
<dbReference type="neXtProt" id="NX_O76081"/>
<dbReference type="OpenTargets" id="ENSG00000147509"/>
<dbReference type="PharmGKB" id="PA34373"/>
<dbReference type="VEuPathDB" id="HostDB:ENSG00000147509"/>
<dbReference type="eggNOG" id="KOG3589">
    <property type="taxonomic scope" value="Eukaryota"/>
</dbReference>
<dbReference type="GeneTree" id="ENSGT00940000159123"/>
<dbReference type="HOGENOM" id="CLU_059863_0_0_1"/>
<dbReference type="InParanoid" id="O76081"/>
<dbReference type="OMA" id="PMGSEWM"/>
<dbReference type="OrthoDB" id="10266999at2759"/>
<dbReference type="PAN-GO" id="O76081">
    <property type="GO annotations" value="0 GO annotations based on evolutionary models"/>
</dbReference>
<dbReference type="PhylomeDB" id="O76081"/>
<dbReference type="TreeFam" id="TF315837"/>
<dbReference type="PathwayCommons" id="O76081"/>
<dbReference type="Reactome" id="R-HSA-418594">
    <property type="pathway name" value="G alpha (i) signalling events"/>
</dbReference>
<dbReference type="Reactome" id="R-HSA-418597">
    <property type="pathway name" value="G alpha (z) signalling events"/>
</dbReference>
<dbReference type="SignaLink" id="O76081"/>
<dbReference type="BioGRID-ORCS" id="8601">
    <property type="hits" value="10 hits in 1153 CRISPR screens"/>
</dbReference>
<dbReference type="ChiTaRS" id="RGS20">
    <property type="organism name" value="human"/>
</dbReference>
<dbReference type="GeneWiki" id="RGS20"/>
<dbReference type="GenomeRNAi" id="8601"/>
<dbReference type="Pharos" id="O76081">
    <property type="development level" value="Tbio"/>
</dbReference>
<dbReference type="PRO" id="PR:O76081"/>
<dbReference type="Proteomes" id="UP000005640">
    <property type="component" value="Chromosome 8"/>
</dbReference>
<dbReference type="RNAct" id="O76081">
    <property type="molecule type" value="protein"/>
</dbReference>
<dbReference type="Bgee" id="ENSG00000147509">
    <property type="expression patterns" value="Expressed in caudate nucleus and 129 other cell types or tissues"/>
</dbReference>
<dbReference type="ExpressionAtlas" id="O76081">
    <property type="expression patterns" value="baseline and differential"/>
</dbReference>
<dbReference type="GO" id="GO:0005737">
    <property type="term" value="C:cytoplasm"/>
    <property type="evidence" value="ECO:0000315"/>
    <property type="project" value="CACAO"/>
</dbReference>
<dbReference type="GO" id="GO:0005634">
    <property type="term" value="C:nucleus"/>
    <property type="evidence" value="ECO:0007669"/>
    <property type="project" value="UniProtKB-SubCell"/>
</dbReference>
<dbReference type="GO" id="GO:0005886">
    <property type="term" value="C:plasma membrane"/>
    <property type="evidence" value="ECO:0000304"/>
    <property type="project" value="Reactome"/>
</dbReference>
<dbReference type="GO" id="GO:0005802">
    <property type="term" value="C:trans-Golgi network"/>
    <property type="evidence" value="ECO:0000315"/>
    <property type="project" value="CACAO"/>
</dbReference>
<dbReference type="GO" id="GO:0005096">
    <property type="term" value="F:GTPase activator activity"/>
    <property type="evidence" value="ECO:0000304"/>
    <property type="project" value="ProtInc"/>
</dbReference>
<dbReference type="GO" id="GO:0003924">
    <property type="term" value="F:GTPase activity"/>
    <property type="evidence" value="ECO:0000304"/>
    <property type="project" value="Reactome"/>
</dbReference>
<dbReference type="GO" id="GO:0007186">
    <property type="term" value="P:G protein-coupled receptor signaling pathway"/>
    <property type="evidence" value="ECO:0000304"/>
    <property type="project" value="Reactome"/>
</dbReference>
<dbReference type="GO" id="GO:0009968">
    <property type="term" value="P:negative regulation of signal transduction"/>
    <property type="evidence" value="ECO:0007669"/>
    <property type="project" value="UniProtKB-KW"/>
</dbReference>
<dbReference type="GO" id="GO:0008277">
    <property type="term" value="P:regulation of G protein-coupled receptor signaling pathway"/>
    <property type="evidence" value="ECO:0000304"/>
    <property type="project" value="ProtInc"/>
</dbReference>
<dbReference type="CDD" id="cd08746">
    <property type="entry name" value="RGS_RGS20"/>
    <property type="match status" value="1"/>
</dbReference>
<dbReference type="FunFam" id="1.10.167.10:FF:000015">
    <property type="entry name" value="Regulator of G-protein signaling 17"/>
    <property type="match status" value="1"/>
</dbReference>
<dbReference type="Gene3D" id="1.10.167.10">
    <property type="entry name" value="Regulator of G-protein Signalling 4, domain 2"/>
    <property type="match status" value="1"/>
</dbReference>
<dbReference type="InterPro" id="IPR016137">
    <property type="entry name" value="RGS"/>
</dbReference>
<dbReference type="InterPro" id="IPR036305">
    <property type="entry name" value="RGS_sf"/>
</dbReference>
<dbReference type="InterPro" id="IPR044926">
    <property type="entry name" value="RGS_subdomain_2"/>
</dbReference>
<dbReference type="PANTHER" id="PTHR10845">
    <property type="entry name" value="REGULATOR OF G PROTEIN SIGNALING"/>
    <property type="match status" value="1"/>
</dbReference>
<dbReference type="PANTHER" id="PTHR10845:SF277">
    <property type="entry name" value="REGULATOR OF G-PROTEIN SIGNALING 20"/>
    <property type="match status" value="1"/>
</dbReference>
<dbReference type="Pfam" id="PF00615">
    <property type="entry name" value="RGS"/>
    <property type="match status" value="1"/>
</dbReference>
<dbReference type="PRINTS" id="PR01301">
    <property type="entry name" value="RGSPROTEIN"/>
</dbReference>
<dbReference type="SMART" id="SM00315">
    <property type="entry name" value="RGS"/>
    <property type="match status" value="1"/>
</dbReference>
<dbReference type="SUPFAM" id="SSF48097">
    <property type="entry name" value="Regulator of G-protein signaling, RGS"/>
    <property type="match status" value="1"/>
</dbReference>
<dbReference type="PROSITE" id="PS50132">
    <property type="entry name" value="RGS"/>
    <property type="match status" value="1"/>
</dbReference>
<keyword id="KW-0025">Alternative splicing</keyword>
<keyword id="KW-0963">Cytoplasm</keyword>
<keyword id="KW-0325">Glycoprotein</keyword>
<keyword id="KW-0449">Lipoprotein</keyword>
<keyword id="KW-0472">Membrane</keyword>
<keyword id="KW-0539">Nucleus</keyword>
<keyword id="KW-0564">Palmitate</keyword>
<keyword id="KW-0597">Phosphoprotein</keyword>
<keyword id="KW-1267">Proteomics identification</keyword>
<keyword id="KW-1185">Reference proteome</keyword>
<keyword id="KW-0734">Signal transduction inhibitor</keyword>
<keyword id="KW-0832">Ubl conjugation</keyword>
<evidence type="ECO:0000250" key="1"/>
<evidence type="ECO:0000255" key="2">
    <source>
        <dbReference type="PROSITE-ProRule" id="PRU00171"/>
    </source>
</evidence>
<evidence type="ECO:0000256" key="3">
    <source>
        <dbReference type="SAM" id="MobiDB-lite"/>
    </source>
</evidence>
<evidence type="ECO:0000269" key="4">
    <source>
    </source>
</evidence>
<evidence type="ECO:0000303" key="5">
    <source>
    </source>
</evidence>
<evidence type="ECO:0000303" key="6">
    <source>
    </source>
</evidence>
<evidence type="ECO:0000303" key="7">
    <source>
    </source>
</evidence>
<evidence type="ECO:0000303" key="8">
    <source>
    </source>
</evidence>
<evidence type="ECO:0000303" key="9">
    <source ref="4"/>
</evidence>
<accession>O76081</accession>
<accession>Q96BG9</accession>
<name>RGS20_HUMAN</name>
<reference key="1">
    <citation type="journal article" date="1998" name="J. Biol. Chem.">
        <title>RGSZ1, a Gz-selective RGS protein in brain. Structure, membrane association, regulation by Galphaz phosphorylation, and relationship to a Gz GTPase-activating protein subfamily.</title>
        <authorList>
            <person name="Wang J."/>
            <person name="Ducret A."/>
            <person name="Tu Y."/>
            <person name="Kozasa T."/>
            <person name="Aebersold R."/>
            <person name="Ross E.M."/>
        </authorList>
    </citation>
    <scope>NUCLEOTIDE SEQUENCE [MRNA] (ISOFORM 5)</scope>
    <scope>CHARACTERIZATION</scope>
    <source>
        <tissue>Fetal brain</tissue>
    </source>
</reference>
<reference key="2">
    <citation type="submission" date="2001-04" db="EMBL/GenBank/DDBJ databases">
        <authorList>
            <person name="Wang J."/>
            <person name="Ducret A."/>
            <person name="Ross E.M."/>
        </authorList>
    </citation>
    <scope>SEQUENCE REVISION TO N-TERMINUS</scope>
</reference>
<reference key="3">
    <citation type="journal article" date="2001" name="Genomics">
        <title>RGSZ1 and Ret RGS: two of several splice variants from the gene RGS20.</title>
        <authorList>
            <person name="Barker S.A."/>
            <person name="Wang J."/>
            <person name="Sierra D.A."/>
            <person name="Ross E.M."/>
        </authorList>
    </citation>
    <scope>NUCLEOTIDE SEQUENCE [MRNA] (ISOFORMS 1; 2; 3; 4 AND 6)</scope>
    <source>
        <tissue>Retina</tissue>
    </source>
</reference>
<reference key="4">
    <citation type="submission" date="2002-03" db="EMBL/GenBank/DDBJ databases">
        <title>cDNA clones of human proteins involved in signal transduction sequenced by the Guthrie cDNA resource center (www.cdna.org).</title>
        <authorList>
            <person name="Puhl H.L. III"/>
            <person name="Ikeda S.R."/>
            <person name="Aronstam R.S."/>
        </authorList>
    </citation>
    <scope>NUCLEOTIDE SEQUENCE [LARGE SCALE MRNA] (ISOFORM 4)</scope>
</reference>
<reference key="5">
    <citation type="journal article" date="2004" name="Genome Res.">
        <title>The status, quality, and expansion of the NIH full-length cDNA project: the Mammalian Gene Collection (MGC).</title>
        <authorList>
            <consortium name="The MGC Project Team"/>
        </authorList>
    </citation>
    <scope>NUCLEOTIDE SEQUENCE [LARGE SCALE MRNA] (ISOFORM 5)</scope>
    <source>
        <tissue>Fetal brain</tissue>
        <tissue>Skin</tissue>
    </source>
</reference>
<reference key="6">
    <citation type="journal article" date="1998" name="J. Biol. Chem.">
        <title>RGSZ1, a Gz-selective regulator of G protein signaling whose action is sensitive to the phosphorylation state of Gzalpha.</title>
        <authorList>
            <person name="Glick J.L."/>
            <person name="Meigs T.E."/>
            <person name="Miron A."/>
            <person name="Casey P.J."/>
        </authorList>
    </citation>
    <scope>NUCLEOTIDE SEQUENCE [MRNA] OF 57-388 (ISOFORM 1)</scope>
</reference>
<reference key="7">
    <citation type="journal article" date="2002" name="J. Biol. Chem.">
        <title>Regulator of G protein signaling Z1 (RGSZ1) interacts with Galpha i subunits and regulates Galpha i-mediated cell signaling.</title>
        <authorList>
            <person name="Wang Y."/>
            <person name="Ho G."/>
            <person name="Zhang J.J."/>
            <person name="Nieuwenhuijsen B."/>
            <person name="Edris W."/>
            <person name="Chanda P.K."/>
            <person name="Young K.H."/>
        </authorList>
    </citation>
    <scope>FUNCTION</scope>
</reference>
<organism>
    <name type="scientific">Homo sapiens</name>
    <name type="common">Human</name>
    <dbReference type="NCBI Taxonomy" id="9606"/>
    <lineage>
        <taxon>Eukaryota</taxon>
        <taxon>Metazoa</taxon>
        <taxon>Chordata</taxon>
        <taxon>Craniata</taxon>
        <taxon>Vertebrata</taxon>
        <taxon>Euteleostomi</taxon>
        <taxon>Mammalia</taxon>
        <taxon>Eutheria</taxon>
        <taxon>Euarchontoglires</taxon>
        <taxon>Primates</taxon>
        <taxon>Haplorrhini</taxon>
        <taxon>Catarrhini</taxon>
        <taxon>Hominidae</taxon>
        <taxon>Homo</taxon>
    </lineage>
</organism>
<feature type="chain" id="PRO_0000204233" description="Regulator of G-protein signaling 20">
    <location>
        <begin position="1"/>
        <end position="388"/>
    </location>
</feature>
<feature type="domain" description="RGS" evidence="2">
    <location>
        <begin position="262"/>
        <end position="378"/>
    </location>
</feature>
<feature type="region of interest" description="Disordered" evidence="3">
    <location>
        <begin position="138"/>
        <end position="199"/>
    </location>
</feature>
<feature type="compositionally biased region" description="Low complexity" evidence="3">
    <location>
        <begin position="185"/>
        <end position="197"/>
    </location>
</feature>
<feature type="splice variant" id="VSP_005698" description="In isoform 3." evidence="5">
    <location>
        <begin position="1"/>
        <end position="236"/>
    </location>
</feature>
<feature type="splice variant" id="VSP_005697" description="In isoform 2." evidence="5">
    <location>
        <begin position="1"/>
        <end position="208"/>
    </location>
</feature>
<feature type="splice variant" id="VSP_005694" description="In isoform 5." evidence="6 8">
    <original>MPQLSQDNQECLQKHFSRPSIWTQFLPLFRAQRYNTDIHQITENEGDLRAVPDIK</original>
    <variation>MRTADGGEPAGASSPAGRVDGGL</variation>
    <location>
        <begin position="1"/>
        <end position="55"/>
    </location>
</feature>
<feature type="splice variant" id="VSP_005695" description="In isoform 4." evidence="5 9">
    <location>
        <begin position="3"/>
        <end position="55"/>
    </location>
</feature>
<feature type="splice variant" id="VSP_005696" description="In isoform 1, isoform 4 and isoform 5." evidence="5 6 7 8 9">
    <location>
        <begin position="56"/>
        <end position="170"/>
    </location>
</feature>
<feature type="splice variant" id="VSP_005699" description="In isoform 2." evidence="5">
    <original>CFCWCCCCSCSC</original>
    <variation>MKETSGLFLISS</variation>
    <location>
        <begin position="209"/>
        <end position="220"/>
    </location>
</feature>
<feature type="splice variant" id="VSP_005700" description="In isoform 3." evidence="5">
    <original>ELRADLPTWEE</original>
    <variation>MKETSGLFLIS</variation>
    <location>
        <begin position="237"/>
        <end position="247"/>
    </location>
</feature>
<comment type="function">
    <text evidence="1 4">Inhibits signal transduction by increasing the GTPase activity of G protein alpha subunits thereby driving them into their inactive GDP-bound form. Binds selectively to G(z)-alpha and G(alpha)-i2 subunits, accelerates their GTPase activity and regulates their signaling activities. The G(z)-alpha activity is inhibited by the phosphorylation and palmitoylation of the G-protein. Negatively regulates mu-opioid receptor-mediated activation of the G-proteins (By similarity).</text>
</comment>
<comment type="subunit">
    <text evidence="1">Forms a complex with G(alpha)z/i2 subunits and mu-opioid receptors; the formation of this complex results in mu-opioid receptor desensitization. Interacts with OPRM1 (By similarity).</text>
</comment>
<comment type="interaction">
    <interactant intactId="EBI-1052678">
        <id>O76081</id>
    </interactant>
    <interactant intactId="EBI-745213">
        <id>P29972</id>
        <label>AQP1</label>
    </interactant>
    <organismsDiffer>false</organismsDiffer>
    <experiments>3</experiments>
</comment>
<comment type="interaction">
    <interactant intactId="EBI-1052678">
        <id>O76081</id>
    </interactant>
    <interactant intactId="EBI-744545">
        <id>Q8NEC5</id>
        <label>CATSPER1</label>
    </interactant>
    <organismsDiffer>false</organismsDiffer>
    <experiments>4</experiments>
</comment>
<comment type="interaction">
    <interactant intactId="EBI-1052678">
        <id>O76081</id>
    </interactant>
    <interactant intactId="EBI-713677">
        <id>Q9UGL9</id>
        <label>CRCT1</label>
    </interactant>
    <organismsDiffer>false</organismsDiffer>
    <experiments>3</experiments>
</comment>
<comment type="interaction">
    <interactant intactId="EBI-1052678">
        <id>O76081</id>
    </interactant>
    <interactant intactId="EBI-10192698">
        <id>Q02930-3</id>
        <label>CREB5</label>
    </interactant>
    <organismsDiffer>false</organismsDiffer>
    <experiments>3</experiments>
</comment>
<comment type="interaction">
    <interactant intactId="EBI-1052678">
        <id>O76081</id>
    </interactant>
    <interactant intactId="EBI-495538">
        <id>P48023</id>
        <label>FASLG</label>
    </interactant>
    <organismsDiffer>false</organismsDiffer>
    <experiments>3</experiments>
</comment>
<comment type="interaction">
    <interactant intactId="EBI-1052678">
        <id>O76081</id>
    </interactant>
    <interactant intactId="EBI-374781">
        <id>O76003</id>
        <label>GLRX3</label>
    </interactant>
    <organismsDiffer>false</organismsDiffer>
    <experiments>6</experiments>
</comment>
<comment type="interaction">
    <interactant intactId="EBI-1052678">
        <id>O76081</id>
    </interactant>
    <interactant intactId="EBI-740785">
        <id>P49639</id>
        <label>HOXA1</label>
    </interactant>
    <organismsDiffer>false</organismsDiffer>
    <experiments>5</experiments>
</comment>
<comment type="interaction">
    <interactant intactId="EBI-1052678">
        <id>O76081</id>
    </interactant>
    <interactant intactId="EBI-352528">
        <id>P10809</id>
        <label>HSPD1</label>
    </interactant>
    <organismsDiffer>false</organismsDiffer>
    <experiments>3</experiments>
</comment>
<comment type="interaction">
    <interactant intactId="EBI-1052678">
        <id>O76081</id>
    </interactant>
    <interactant intactId="EBI-6426443">
        <id>Q2WGJ6</id>
        <label>KLHL38</label>
    </interactant>
    <organismsDiffer>false</organismsDiffer>
    <experiments>3</experiments>
</comment>
<comment type="interaction">
    <interactant intactId="EBI-1052678">
        <id>O76081</id>
    </interactant>
    <interactant intactId="EBI-10172511">
        <id>Q9BYR5</id>
        <label>KRTAP4-2</label>
    </interactant>
    <organismsDiffer>false</organismsDiffer>
    <experiments>3</experiments>
</comment>
<comment type="interaction">
    <interactant intactId="EBI-1052678">
        <id>O76081</id>
    </interactant>
    <interactant intactId="EBI-3958099">
        <id>P26371</id>
        <label>KRTAP5-9</label>
    </interactant>
    <organismsDiffer>false</organismsDiffer>
    <experiments>3</experiments>
</comment>
<comment type="interaction">
    <interactant intactId="EBI-1052678">
        <id>O76081</id>
    </interactant>
    <interactant intactId="EBI-10245913">
        <id>Q5T7P3</id>
        <label>LCE1B</label>
    </interactant>
    <organismsDiffer>false</organismsDiffer>
    <experiments>5</experiments>
</comment>
<comment type="interaction">
    <interactant intactId="EBI-1052678">
        <id>O76081</id>
    </interactant>
    <interactant intactId="EBI-10246750">
        <id>Q5TA82</id>
        <label>LCE2D</label>
    </interactant>
    <organismsDiffer>false</organismsDiffer>
    <experiments>3</experiments>
</comment>
<comment type="interaction">
    <interactant intactId="EBI-1052678">
        <id>O76081</id>
    </interactant>
    <interactant intactId="EBI-10245456">
        <id>Q5T5B0</id>
        <label>LCE3E</label>
    </interactant>
    <organismsDiffer>false</organismsDiffer>
    <experiments>3</experiments>
</comment>
<comment type="interaction">
    <interactant intactId="EBI-1052678">
        <id>O76081</id>
    </interactant>
    <interactant intactId="EBI-10246358">
        <id>Q5TA78</id>
        <label>LCE4A</label>
    </interactant>
    <organismsDiffer>false</organismsDiffer>
    <experiments>3</experiments>
</comment>
<comment type="interaction">
    <interactant intactId="EBI-1052678">
        <id>O76081</id>
    </interactant>
    <interactant intactId="EBI-947402">
        <id>O60336</id>
        <label>MAPKBP1</label>
    </interactant>
    <organismsDiffer>false</organismsDiffer>
    <experiments>3</experiments>
</comment>
<comment type="interaction">
    <interactant intactId="EBI-1052678">
        <id>O76081</id>
    </interactant>
    <interactant intactId="EBI-1188238">
        <id>P48039</id>
        <label>MTNR1A</label>
    </interactant>
    <organismsDiffer>false</organismsDiffer>
    <experiments>6</experiments>
</comment>
<comment type="interaction">
    <interactant intactId="EBI-1052678">
        <id>O76081</id>
    </interactant>
    <interactant intactId="EBI-1188341">
        <id>P49286</id>
        <label>MTNR1B</label>
    </interactant>
    <organismsDiffer>false</organismsDiffer>
    <experiments>2</experiments>
</comment>
<comment type="interaction">
    <interactant intactId="EBI-1052678">
        <id>O76081</id>
    </interactant>
    <interactant intactId="EBI-2826725">
        <id>Q9NQS3</id>
        <label>NECTIN3</label>
    </interactant>
    <organismsDiffer>false</organismsDiffer>
    <experiments>3</experiments>
</comment>
<comment type="interaction">
    <interactant intactId="EBI-1052678">
        <id>O76081</id>
    </interactant>
    <interactant intactId="EBI-740446">
        <id>P32242</id>
        <label>OTX1</label>
    </interactant>
    <organismsDiffer>false</organismsDiffer>
    <experiments>5</experiments>
</comment>
<comment type="interaction">
    <interactant intactId="EBI-1052678">
        <id>O76081</id>
    </interactant>
    <interactant intactId="EBI-10234038">
        <id>P43115-12</id>
        <label>PTGER3</label>
    </interactant>
    <organismsDiffer>false</organismsDiffer>
    <experiments>3</experiments>
</comment>
<comment type="interaction">
    <interactant intactId="EBI-1052678">
        <id>O76081</id>
    </interactant>
    <interactant intactId="EBI-10315054">
        <id>Q9NWL9</id>
    </interactant>
    <organismsDiffer>false</organismsDiffer>
    <experiments>3</experiments>
</comment>
<comment type="interaction">
    <interactant intactId="EBI-1052678">
        <id>O76081</id>
    </interactant>
    <interactant intactId="EBI-3957603">
        <id>P09022</id>
        <label>Hoxa1</label>
    </interactant>
    <organismsDiffer>true</organismsDiffer>
    <experiments>3</experiments>
</comment>
<comment type="interaction">
    <interactant intactId="EBI-10178530">
        <id>O76081-6</id>
    </interactant>
    <interactant intactId="EBI-1211484">
        <id>P05187</id>
        <label>ALPP</label>
    </interactant>
    <organismsDiffer>false</organismsDiffer>
    <experiments>3</experiments>
</comment>
<comment type="interaction">
    <interactant intactId="EBI-10178530">
        <id>O76081-6</id>
    </interactant>
    <interactant intactId="EBI-745213">
        <id>P29972</id>
        <label>AQP1</label>
    </interactant>
    <organismsDiffer>false</organismsDiffer>
    <experiments>3</experiments>
</comment>
<comment type="interaction">
    <interactant intactId="EBI-10178530">
        <id>O76081-6</id>
    </interactant>
    <interactant intactId="EBI-744545">
        <id>Q8NEC5</id>
        <label>CATSPER1</label>
    </interactant>
    <organismsDiffer>false</organismsDiffer>
    <experiments>3</experiments>
</comment>
<comment type="interaction">
    <interactant intactId="EBI-10178530">
        <id>O76081-6</id>
    </interactant>
    <interactant intactId="EBI-747133">
        <id>P27658</id>
        <label>COL8A1</label>
    </interactant>
    <organismsDiffer>false</organismsDiffer>
    <experiments>3</experiments>
</comment>
<comment type="interaction">
    <interactant intactId="EBI-10178530">
        <id>O76081-6</id>
    </interactant>
    <interactant intactId="EBI-713677">
        <id>Q9UGL9</id>
        <label>CRCT1</label>
    </interactant>
    <organismsDiffer>false</organismsDiffer>
    <experiments>6</experiments>
</comment>
<comment type="interaction">
    <interactant intactId="EBI-10178530">
        <id>O76081-6</id>
    </interactant>
    <interactant intactId="EBI-10192698">
        <id>Q02930-3</id>
        <label>CREB5</label>
    </interactant>
    <organismsDiffer>false</organismsDiffer>
    <experiments>6</experiments>
</comment>
<comment type="interaction">
    <interactant intactId="EBI-10178530">
        <id>O76081-6</id>
    </interactant>
    <interactant intactId="EBI-495538">
        <id>P48023</id>
        <label>FASLG</label>
    </interactant>
    <organismsDiffer>false</organismsDiffer>
    <experiments>6</experiments>
</comment>
<comment type="interaction">
    <interactant intactId="EBI-10178530">
        <id>O76081-6</id>
    </interactant>
    <interactant intactId="EBI-374781">
        <id>O76003</id>
        <label>GLRX3</label>
    </interactant>
    <organismsDiffer>false</organismsDiffer>
    <experiments>3</experiments>
</comment>
<comment type="interaction">
    <interactant intactId="EBI-10178530">
        <id>O76081-6</id>
    </interactant>
    <interactant intactId="EBI-353997">
        <id>P04899</id>
        <label>GNAI2</label>
    </interactant>
    <organismsDiffer>false</organismsDiffer>
    <experiments>3</experiments>
</comment>
<comment type="interaction">
    <interactant intactId="EBI-10178530">
        <id>O76081-6</id>
    </interactant>
    <interactant intactId="EBI-740785">
        <id>P49639</id>
        <label>HOXA1</label>
    </interactant>
    <organismsDiffer>false</organismsDiffer>
    <experiments>3</experiments>
</comment>
<comment type="interaction">
    <interactant intactId="EBI-10178530">
        <id>O76081-6</id>
    </interactant>
    <interactant intactId="EBI-3915012">
        <id>P04196</id>
        <label>HRG</label>
    </interactant>
    <organismsDiffer>false</organismsDiffer>
    <experiments>3</experiments>
</comment>
<comment type="interaction">
    <interactant intactId="EBI-10178530">
        <id>O76081-6</id>
    </interactant>
    <interactant intactId="EBI-352528">
        <id>P10809</id>
        <label>HSPD1</label>
    </interactant>
    <organismsDiffer>false</organismsDiffer>
    <experiments>3</experiments>
</comment>
<comment type="interaction">
    <interactant intactId="EBI-10178530">
        <id>O76081-6</id>
    </interactant>
    <interactant intactId="EBI-10178524">
        <id>I3WAC9</id>
        <label>INS</label>
    </interactant>
    <organismsDiffer>false</organismsDiffer>
    <experiments>3</experiments>
</comment>
<comment type="interaction">
    <interactant intactId="EBI-10178530">
        <id>O76081-6</id>
    </interactant>
    <interactant intactId="EBI-6426443">
        <id>Q2WGJ6</id>
        <label>KLHL38</label>
    </interactant>
    <organismsDiffer>false</organismsDiffer>
    <experiments>3</experiments>
</comment>
<comment type="interaction">
    <interactant intactId="EBI-10178530">
        <id>O76081-6</id>
    </interactant>
    <interactant intactId="EBI-10172511">
        <id>Q9BYR5</id>
        <label>KRTAP4-2</label>
    </interactant>
    <organismsDiffer>false</organismsDiffer>
    <experiments>6</experiments>
</comment>
<comment type="interaction">
    <interactant intactId="EBI-10178530">
        <id>O76081-6</id>
    </interactant>
    <interactant intactId="EBI-11993296">
        <id>Q6L8G4</id>
        <label>KRTAP5-11</label>
    </interactant>
    <organismsDiffer>false</organismsDiffer>
    <experiments>3</experiments>
</comment>
<comment type="interaction">
    <interactant intactId="EBI-10178530">
        <id>O76081-6</id>
    </interactant>
    <interactant intactId="EBI-10250562">
        <id>Q6L8G9</id>
        <label>KRTAP5-6</label>
    </interactant>
    <organismsDiffer>false</organismsDiffer>
    <experiments>6</experiments>
</comment>
<comment type="interaction">
    <interactant intactId="EBI-10178530">
        <id>O76081-6</id>
    </interactant>
    <interactant intactId="EBI-3958099">
        <id>P26371</id>
        <label>KRTAP5-9</label>
    </interactant>
    <organismsDiffer>false</organismsDiffer>
    <experiments>6</experiments>
</comment>
<comment type="interaction">
    <interactant intactId="EBI-10178530">
        <id>O76081-6</id>
    </interactant>
    <interactant intactId="EBI-1043191">
        <id>Q9BYQ3</id>
        <label>KRTAP9-3</label>
    </interactant>
    <organismsDiffer>false</organismsDiffer>
    <experiments>3</experiments>
</comment>
<comment type="interaction">
    <interactant intactId="EBI-10178530">
        <id>O76081-6</id>
    </interactant>
    <interactant intactId="EBI-11958364">
        <id>Q9BYQ0</id>
        <label>KRTAP9-8</label>
    </interactant>
    <organismsDiffer>false</organismsDiffer>
    <experiments>3</experiments>
</comment>
<comment type="interaction">
    <interactant intactId="EBI-10178530">
        <id>O76081-6</id>
    </interactant>
    <interactant intactId="EBI-11962058">
        <id>Q5T7P2</id>
        <label>LCE1A</label>
    </interactant>
    <organismsDiffer>false</organismsDiffer>
    <experiments>3</experiments>
</comment>
<comment type="interaction">
    <interactant intactId="EBI-10178530">
        <id>O76081-6</id>
    </interactant>
    <interactant intactId="EBI-10245913">
        <id>Q5T7P3</id>
        <label>LCE1B</label>
    </interactant>
    <organismsDiffer>false</organismsDiffer>
    <experiments>6</experiments>
</comment>
<comment type="interaction">
    <interactant intactId="EBI-10178530">
        <id>O76081-6</id>
    </interactant>
    <interactant intactId="EBI-11958008">
        <id>Q5T754</id>
        <label>LCE1F</label>
    </interactant>
    <organismsDiffer>false</organismsDiffer>
    <experiments>3</experiments>
</comment>
<comment type="interaction">
    <interactant intactId="EBI-10178530">
        <id>O76081-6</id>
    </interactant>
    <interactant intactId="EBI-10246607">
        <id>Q5TA79</id>
        <label>LCE2A</label>
    </interactant>
    <organismsDiffer>false</organismsDiffer>
    <experiments>3</experiments>
</comment>
<comment type="interaction">
    <interactant intactId="EBI-10178530">
        <id>O76081-6</id>
    </interactant>
    <interactant intactId="EBI-11478468">
        <id>O14633</id>
        <label>LCE2B</label>
    </interactant>
    <organismsDiffer>false</organismsDiffer>
    <experiments>3</experiments>
</comment>
<comment type="interaction">
    <interactant intactId="EBI-10178530">
        <id>O76081-6</id>
    </interactant>
    <interactant intactId="EBI-11973993">
        <id>Q5TA81</id>
        <label>LCE2C</label>
    </interactant>
    <organismsDiffer>false</organismsDiffer>
    <experiments>3</experiments>
</comment>
<comment type="interaction">
    <interactant intactId="EBI-10178530">
        <id>O76081-6</id>
    </interactant>
    <interactant intactId="EBI-9394625">
        <id>Q5TA76</id>
        <label>LCE3A</label>
    </interactant>
    <organismsDiffer>false</organismsDiffer>
    <experiments>3</experiments>
</comment>
<comment type="interaction">
    <interactant intactId="EBI-10178530">
        <id>O76081-6</id>
    </interactant>
    <interactant intactId="EBI-10245291">
        <id>Q5T5A8</id>
        <label>LCE3C</label>
    </interactant>
    <organismsDiffer>false</organismsDiffer>
    <experiments>3</experiments>
</comment>
<comment type="interaction">
    <interactant intactId="EBI-10178530">
        <id>O76081-6</id>
    </interactant>
    <interactant intactId="EBI-6658837">
        <id>Q9BYE3</id>
        <label>LCE3D</label>
    </interactant>
    <organismsDiffer>false</organismsDiffer>
    <experiments>3</experiments>
</comment>
<comment type="interaction">
    <interactant intactId="EBI-10178530">
        <id>O76081-6</id>
    </interactant>
    <interactant intactId="EBI-10245456">
        <id>Q5T5B0</id>
        <label>LCE3E</label>
    </interactant>
    <organismsDiffer>false</organismsDiffer>
    <experiments>6</experiments>
</comment>
<comment type="interaction">
    <interactant intactId="EBI-10178530">
        <id>O76081-6</id>
    </interactant>
    <interactant intactId="EBI-10246358">
        <id>Q5TA78</id>
        <label>LCE4A</label>
    </interactant>
    <organismsDiffer>false</organismsDiffer>
    <experiments>8</experiments>
</comment>
<comment type="interaction">
    <interactant intactId="EBI-10178530">
        <id>O76081-6</id>
    </interactant>
    <interactant intactId="EBI-11955689">
        <id>Q5TCM9</id>
        <label>LCE5A</label>
    </interactant>
    <organismsDiffer>false</organismsDiffer>
    <experiments>3</experiments>
</comment>
<comment type="interaction">
    <interactant intactId="EBI-10178530">
        <id>O76081-6</id>
    </interactant>
    <interactant intactId="EBI-739832">
        <id>Q8TBB1</id>
        <label>LNX1</label>
    </interactant>
    <organismsDiffer>false</organismsDiffer>
    <experiments>3</experiments>
</comment>
<comment type="interaction">
    <interactant intactId="EBI-10178530">
        <id>O76081-6</id>
    </interactant>
    <interactant intactId="EBI-947402">
        <id>O60336</id>
        <label>MAPKBP1</label>
    </interactant>
    <organismsDiffer>false</organismsDiffer>
    <experiments>3</experiments>
</comment>
<comment type="interaction">
    <interactant intactId="EBI-10178530">
        <id>O76081-6</id>
    </interactant>
    <interactant intactId="EBI-6979889">
        <id>Q92692-2</id>
        <label>NECTIN2</label>
    </interactant>
    <organismsDiffer>false</organismsDiffer>
    <experiments>3</experiments>
</comment>
<comment type="interaction">
    <interactant intactId="EBI-10178530">
        <id>O76081-6</id>
    </interactant>
    <interactant intactId="EBI-1752987">
        <id>Q86SG6</id>
        <label>NEK8</label>
    </interactant>
    <organismsDiffer>false</organismsDiffer>
    <experiments>3</experiments>
</comment>
<comment type="interaction">
    <interactant intactId="EBI-10178530">
        <id>O76081-6</id>
    </interactant>
    <interactant intactId="EBI-1210753">
        <id>Q7Z417</id>
        <label>NUFIP2</label>
    </interactant>
    <organismsDiffer>false</organismsDiffer>
    <experiments>3</experiments>
</comment>
<comment type="interaction">
    <interactant intactId="EBI-10178530">
        <id>O76081-6</id>
    </interactant>
    <interactant intactId="EBI-740446">
        <id>P32242</id>
        <label>OTX1</label>
    </interactant>
    <organismsDiffer>false</organismsDiffer>
    <experiments>3</experiments>
</comment>
<comment type="interaction">
    <interactant intactId="EBI-10178530">
        <id>O76081-6</id>
    </interactant>
    <interactant intactId="EBI-10234038">
        <id>P43115-12</id>
        <label>PTGER3</label>
    </interactant>
    <organismsDiffer>false</organismsDiffer>
    <experiments>3</experiments>
</comment>
<comment type="interaction">
    <interactant intactId="EBI-10178530">
        <id>O76081-6</id>
    </interactant>
    <interactant intactId="EBI-7199479">
        <id>Q8WUK0</id>
        <label>PTPMT1</label>
    </interactant>
    <organismsDiffer>false</organismsDiffer>
    <experiments>6</experiments>
</comment>
<comment type="interaction">
    <interactant intactId="EBI-10178530">
        <id>O76081-6</id>
    </interactant>
    <interactant intactId="EBI-10249550">
        <id>Q6EMK4</id>
        <label>VASN</label>
    </interactant>
    <organismsDiffer>false</organismsDiffer>
    <experiments>3</experiments>
</comment>
<comment type="interaction">
    <interactant intactId="EBI-10178530">
        <id>O76081-6</id>
    </interactant>
    <interactant intactId="EBI-10211777">
        <id>A0A384ME25</id>
    </interactant>
    <organismsDiffer>false</organismsDiffer>
    <experiments>3</experiments>
</comment>
<comment type="interaction">
    <interactant intactId="EBI-10178530">
        <id>O76081-6</id>
    </interactant>
    <interactant intactId="EBI-10315054">
        <id>Q9NWL9</id>
    </interactant>
    <organismsDiffer>false</organismsDiffer>
    <experiments>3</experiments>
</comment>
<comment type="subcellular location">
    <subcellularLocation>
        <location>Membrane</location>
        <topology>Lipid-anchor</topology>
    </subcellularLocation>
    <subcellularLocation>
        <location>Nucleus</location>
    </subcellularLocation>
    <subcellularLocation>
        <location>Cytoplasm</location>
    </subcellularLocation>
    <text evidence="1">Shuttles between the cytoplasm/cell membrane and the nucleus. Anchored to the membrane through palmitoylation.</text>
</comment>
<comment type="alternative products">
    <event type="alternative splicing"/>
    <isoform>
        <id>O76081-1</id>
        <name>6</name>
        <sequence type="displayed"/>
    </isoform>
    <isoform>
        <id>O76081-2</id>
        <name>1</name>
        <sequence type="described" ref="VSP_005696"/>
    </isoform>
    <isoform>
        <id>O76081-3</id>
        <name>2</name>
        <sequence type="described" ref="VSP_005697 VSP_005699"/>
    </isoform>
    <isoform>
        <id>O76081-4</id>
        <name>3</name>
        <sequence type="described" ref="VSP_005698 VSP_005700"/>
    </isoform>
    <isoform>
        <id>O76081-5</id>
        <name>4</name>
        <sequence type="described" ref="VSP_005695 VSP_005696"/>
    </isoform>
    <isoform>
        <id>O76081-6</id>
        <name>5</name>
        <sequence type="described" ref="VSP_005694 VSP_005696"/>
    </isoform>
</comment>
<comment type="tissue specificity">
    <text>Isoform 5 is expressed in brain at high levels in the caudate nucleus and temporal lobe.</text>
</comment>
<comment type="PTM">
    <text evidence="1">Fatty acylated. Heavily palmitoylated in the cysteine string motif (By similarity).</text>
</comment>
<comment type="PTM">
    <text evidence="1">N- and O-glycosylated in synapsomal membranes.</text>
</comment>
<comment type="PTM">
    <text evidence="1">Serine phosphorylated in synapsomal membranes.</text>
</comment>
<comment type="PTM">
    <text evidence="1">Sumoylated with SUMO1 and SUMO2 in synaptosomes. The sumoylated forms act as a scaffold for sequestering mu-opioid receptor-activated G(alpha) subunits (By similarity).</text>
</comment>
<proteinExistence type="evidence at protein level"/>
<sequence length="388" mass="43692">MPQLSQDNQECLQKHFSRPSIWTQFLPLFRAQRYNTDIHQITENEGDLRAVPDIKSFPPAQLPDSPAAPKLFGLLSSPLSSLARFFSHLLRRPPPEAPRRRLDFSPLLPALPAARLSRGHEELPGRLSLLLGAALALPGRPSGGRPLRPPHPVAKPREEDATAGQSSPMPQMGSERMEMRKRQMPAAQDTPGAAPGQPGAGSRGSNACCFCWCCCCSCSCLTVRNQEDQRPTIASHELRADLPTWEESPAPTLEEVNAWAQSFDKLMVTPAGRNAFREFLRTEFSEENMLFWMACEELKKEANKNIIEEKARIIYEDYISILSPKEVSLDSRVREVINRNMVEPSQHIFDDAQLQIYTLMHRDSYPRFMNSAVYKDLLQSLSEKSIEA</sequence>